<evidence type="ECO:0000255" key="1"/>
<reference key="1">
    <citation type="journal article" date="2005" name="PLoS Biol.">
        <title>The genome sequence of Rickettsia felis identifies the first putative conjugative plasmid in an obligate intracellular parasite.</title>
        <authorList>
            <person name="Ogata H."/>
            <person name="Renesto P."/>
            <person name="Audic S."/>
            <person name="Robert C."/>
            <person name="Blanc G."/>
            <person name="Fournier P.-E."/>
            <person name="Parinello H."/>
            <person name="Claverie J.-M."/>
            <person name="Raoult D."/>
        </authorList>
    </citation>
    <scope>NUCLEOTIDE SEQUENCE [LARGE SCALE GENOMIC DNA]</scope>
    <source>
        <strain>ATCC VR-1525 / URRWXCal2</strain>
    </source>
</reference>
<keyword id="KW-0732">Signal</keyword>
<feature type="signal peptide" evidence="1">
    <location>
        <begin position="1"/>
        <end position="19"/>
    </location>
</feature>
<feature type="chain" id="PRO_0000268848" description="Uncharacterized protein RF_0480">
    <location>
        <begin position="20"/>
        <end position="294"/>
    </location>
</feature>
<dbReference type="EMBL" id="CP000053">
    <property type="protein sequence ID" value="AAY61331.1"/>
    <property type="molecule type" value="Genomic_DNA"/>
</dbReference>
<dbReference type="STRING" id="315456.RF_0480"/>
<dbReference type="KEGG" id="rfe:RF_0480"/>
<dbReference type="HOGENOM" id="CLU_946219_0_0_5"/>
<dbReference type="OrthoDB" id="7161142at2"/>
<dbReference type="Proteomes" id="UP000008548">
    <property type="component" value="Chromosome"/>
</dbReference>
<dbReference type="InterPro" id="IPR022565">
    <property type="entry name" value="DUF2608"/>
</dbReference>
<dbReference type="Pfam" id="PF11019">
    <property type="entry name" value="DUF2608"/>
    <property type="match status" value="1"/>
</dbReference>
<sequence length="294" mass="34180">MFKRSLFILLLLAASLVKAEIIEVDSLNKIKQDFKENYNKNYVPQDLLVVTVLDEFLFKSLVPIGEQIDKDIYLTLTPLLRNINKNSKAIYIDQLILTNDSYKKELQESDFPNFVNEMSNSKIPIIAVNDGFTGNFNNIPKFEIWFADYLKKNFNIDFSNSFPNNNYIIFNNLDSFANTYPVFYKGILTSNNISKAEMMLNFLIQVGFMPKAFIIISNNIELLKSMEFQLNSYSSNILFIGYHYNNKNTPENKDAAYYTKIINDLISQINKIKRNNPPLKTNKIKDKNPYDKNQ</sequence>
<accession>Q4UJN3</accession>
<gene>
    <name type="ordered locus">RF_0480</name>
</gene>
<name>Y480_RICFE</name>
<proteinExistence type="inferred from homology"/>
<protein>
    <recommendedName>
        <fullName>Uncharacterized protein RF_0480</fullName>
    </recommendedName>
</protein>
<organism>
    <name type="scientific">Rickettsia felis (strain ATCC VR-1525 / URRWXCal2)</name>
    <name type="common">Rickettsia azadi</name>
    <dbReference type="NCBI Taxonomy" id="315456"/>
    <lineage>
        <taxon>Bacteria</taxon>
        <taxon>Pseudomonadati</taxon>
        <taxon>Pseudomonadota</taxon>
        <taxon>Alphaproteobacteria</taxon>
        <taxon>Rickettsiales</taxon>
        <taxon>Rickettsiaceae</taxon>
        <taxon>Rickettsieae</taxon>
        <taxon>Rickettsia</taxon>
        <taxon>spotted fever group</taxon>
    </lineage>
</organism>